<dbReference type="EMBL" id="KN275967">
    <property type="protein sequence ID" value="EEH42635.2"/>
    <property type="status" value="ALT_INIT"/>
    <property type="molecule type" value="Genomic_DNA"/>
</dbReference>
<dbReference type="RefSeq" id="XP_010762743.1">
    <property type="nucleotide sequence ID" value="XM_010764441.1"/>
</dbReference>
<dbReference type="SMR" id="C1GJL9"/>
<dbReference type="GeneID" id="22585944"/>
<dbReference type="KEGG" id="pbn:PADG_07455"/>
<dbReference type="eggNOG" id="ENOG502S416">
    <property type="taxonomic scope" value="Eukaryota"/>
</dbReference>
<dbReference type="HOGENOM" id="CLU_142363_0_0_1"/>
<dbReference type="InParanoid" id="C1GJL9"/>
<dbReference type="OrthoDB" id="18530at33183"/>
<dbReference type="Proteomes" id="UP000001628">
    <property type="component" value="Unassembled WGS sequence"/>
</dbReference>
<dbReference type="GO" id="GO:0036503">
    <property type="term" value="P:ERAD pathway"/>
    <property type="evidence" value="ECO:0007669"/>
    <property type="project" value="TreeGrafter"/>
</dbReference>
<dbReference type="CDD" id="cd23996">
    <property type="entry name" value="LCL2-like"/>
    <property type="match status" value="1"/>
</dbReference>
<dbReference type="InterPro" id="IPR034543">
    <property type="entry name" value="LCL2"/>
</dbReference>
<dbReference type="PANTHER" id="PTHR38425">
    <property type="entry name" value="LONG CHRONOLOGICAL LIFESPAN PROTEIN 2"/>
    <property type="match status" value="1"/>
</dbReference>
<dbReference type="PANTHER" id="PTHR38425:SF1">
    <property type="entry name" value="LONG CHRONOLOGICAL LIFESPAN PROTEIN 2"/>
    <property type="match status" value="1"/>
</dbReference>
<name>LCL2_PARBD</name>
<evidence type="ECO:0000250" key="1"/>
<evidence type="ECO:0000255" key="2"/>
<evidence type="ECO:0000305" key="3"/>
<feature type="signal peptide" evidence="2">
    <location>
        <begin position="1"/>
        <end position="21"/>
    </location>
</feature>
<feature type="chain" id="PRO_0000408617" description="Long chronological lifespan protein 2">
    <location>
        <begin position="22"/>
        <end position="123"/>
    </location>
</feature>
<sequence length="123" mass="13655">MFHILIGALLGLLFLATETRAQFQFFEQMFGGGGHQQQQDHREQNVASDSSWYQRNYDNAHCSDYLCPGTLACVSVPHHCPCQHPDVEDKFELGDGSAICISKGGFKANEAARKVELARKGLL</sequence>
<proteinExistence type="inferred from homology"/>
<reference key="1">
    <citation type="journal article" date="2011" name="PLoS Genet.">
        <title>Comparative genomic analysis of human fungal pathogens causing paracoccidioidomycosis.</title>
        <authorList>
            <person name="Desjardins C.A."/>
            <person name="Champion M.D."/>
            <person name="Holder J.W."/>
            <person name="Muszewska A."/>
            <person name="Goldberg J."/>
            <person name="Bailao A.M."/>
            <person name="Brigido M.M."/>
            <person name="Ferreira M.E."/>
            <person name="Garcia A.M."/>
            <person name="Grynberg M."/>
            <person name="Gujja S."/>
            <person name="Heiman D.I."/>
            <person name="Henn M.R."/>
            <person name="Kodira C.D."/>
            <person name="Leon-Narvaez H."/>
            <person name="Longo L.V.G."/>
            <person name="Ma L.-J."/>
            <person name="Malavazi I."/>
            <person name="Matsuo A.L."/>
            <person name="Morais F.V."/>
            <person name="Pereira M."/>
            <person name="Rodriguez-Brito S."/>
            <person name="Sakthikumar S."/>
            <person name="Salem-Izacc S.M."/>
            <person name="Sykes S.M."/>
            <person name="Teixeira M.M."/>
            <person name="Vallejo M.C."/>
            <person name="Walter M.E."/>
            <person name="Yandava C."/>
            <person name="Young S."/>
            <person name="Zeng Q."/>
            <person name="Zucker J."/>
            <person name="Felipe M.S."/>
            <person name="Goldman G.H."/>
            <person name="Haas B.J."/>
            <person name="McEwen J.G."/>
            <person name="Nino-Vega G."/>
            <person name="Puccia R."/>
            <person name="San-Blas G."/>
            <person name="Soares C.M."/>
            <person name="Birren B.W."/>
            <person name="Cuomo C.A."/>
        </authorList>
    </citation>
    <scope>NUCLEOTIDE SEQUENCE [LARGE SCALE GENOMIC DNA]</scope>
    <source>
        <strain>Pb18</strain>
    </source>
</reference>
<comment type="function">
    <text evidence="1">Probable component of the endoplasmic reticulum-associated degradation (ERAD) pathway.</text>
</comment>
<comment type="similarity">
    <text evidence="3">Belongs to the LCL2 family.</text>
</comment>
<comment type="sequence caution" evidence="3">
    <conflict type="erroneous initiation">
        <sequence resource="EMBL-CDS" id="EEH42635"/>
    </conflict>
    <text>Extended N-terminus.</text>
</comment>
<gene>
    <name type="primary">LCL2</name>
    <name type="ORF">PADG_07455</name>
</gene>
<keyword id="KW-1185">Reference proteome</keyword>
<keyword id="KW-0732">Signal</keyword>
<accession>C1GJL9</accession>
<protein>
    <recommendedName>
        <fullName>Long chronological lifespan protein 2</fullName>
    </recommendedName>
</protein>
<organism>
    <name type="scientific">Paracoccidioides brasiliensis (strain Pb18)</name>
    <dbReference type="NCBI Taxonomy" id="502780"/>
    <lineage>
        <taxon>Eukaryota</taxon>
        <taxon>Fungi</taxon>
        <taxon>Dikarya</taxon>
        <taxon>Ascomycota</taxon>
        <taxon>Pezizomycotina</taxon>
        <taxon>Eurotiomycetes</taxon>
        <taxon>Eurotiomycetidae</taxon>
        <taxon>Onygenales</taxon>
        <taxon>Ajellomycetaceae</taxon>
        <taxon>Paracoccidioides</taxon>
    </lineage>
</organism>